<name>MEP20_ASPFM</name>
<comment type="function">
    <text evidence="1">Secreted metalloproteinase that allows assimilation of proteinaceous substrates. Shows high activities on basic nuclear substrates such as histone and protamine. May be involved in virulence (By similarity).</text>
</comment>
<comment type="catalytic activity">
    <reaction>
        <text>Preferential cleavage of bonds with hydrophobic residues in P1'. Also 3-Asn-|-Gln-4 and 8-Gly-|-Ser-9 bonds in insulin B chain.</text>
        <dbReference type="EC" id="3.4.24.39"/>
    </reaction>
</comment>
<comment type="cofactor">
    <cofactor evidence="1">
        <name>Zn(2+)</name>
        <dbReference type="ChEBI" id="CHEBI:29105"/>
    </cofactor>
    <text evidence="1">Binds 1 zinc ion per subunit.</text>
</comment>
<comment type="subcellular location">
    <subcellularLocation>
        <location evidence="1">Secreted</location>
    </subcellularLocation>
</comment>
<comment type="similarity">
    <text evidence="4">Belongs to the peptidase M35 family.</text>
</comment>
<keyword id="KW-0165">Cleavage on pair of basic residues</keyword>
<keyword id="KW-1015">Disulfide bond</keyword>
<keyword id="KW-0325">Glycoprotein</keyword>
<keyword id="KW-0378">Hydrolase</keyword>
<keyword id="KW-0479">Metal-binding</keyword>
<keyword id="KW-0482">Metalloprotease</keyword>
<keyword id="KW-0645">Protease</keyword>
<keyword id="KW-0964">Secreted</keyword>
<keyword id="KW-0732">Signal</keyword>
<keyword id="KW-0843">Virulence</keyword>
<keyword id="KW-0862">Zinc</keyword>
<keyword id="KW-0865">Zymogen</keyword>
<dbReference type="EC" id="3.4.24.39"/>
<dbReference type="EMBL" id="U24146">
    <property type="protein sequence ID" value="AAB07644.1"/>
    <property type="molecule type" value="Genomic_DNA"/>
</dbReference>
<dbReference type="PIR" id="JC4379">
    <property type="entry name" value="JC4379"/>
</dbReference>
<dbReference type="SMR" id="Q09016"/>
<dbReference type="MEROPS" id="M35.002"/>
<dbReference type="GlyCosmos" id="Q09016">
    <property type="glycosylation" value="2 sites, No reported glycans"/>
</dbReference>
<dbReference type="GO" id="GO:0005576">
    <property type="term" value="C:extracellular region"/>
    <property type="evidence" value="ECO:0007669"/>
    <property type="project" value="UniProtKB-SubCell"/>
</dbReference>
<dbReference type="GO" id="GO:0046872">
    <property type="term" value="F:metal ion binding"/>
    <property type="evidence" value="ECO:0007669"/>
    <property type="project" value="UniProtKB-KW"/>
</dbReference>
<dbReference type="GO" id="GO:0004222">
    <property type="term" value="F:metalloendopeptidase activity"/>
    <property type="evidence" value="ECO:0007669"/>
    <property type="project" value="InterPro"/>
</dbReference>
<dbReference type="GO" id="GO:0006508">
    <property type="term" value="P:proteolysis"/>
    <property type="evidence" value="ECO:0007669"/>
    <property type="project" value="UniProtKB-KW"/>
</dbReference>
<dbReference type="CDD" id="cd11008">
    <property type="entry name" value="M35_deuterolysin_like"/>
    <property type="match status" value="1"/>
</dbReference>
<dbReference type="Gene3D" id="2.60.40.2970">
    <property type="match status" value="1"/>
</dbReference>
<dbReference type="Gene3D" id="3.40.390.10">
    <property type="entry name" value="Collagenase (Catalytic Domain)"/>
    <property type="match status" value="1"/>
</dbReference>
<dbReference type="InterPro" id="IPR050414">
    <property type="entry name" value="Fungal_M35_metalloproteases"/>
</dbReference>
<dbReference type="InterPro" id="IPR024079">
    <property type="entry name" value="MetalloPept_cat_dom_sf"/>
</dbReference>
<dbReference type="InterPro" id="IPR001384">
    <property type="entry name" value="Peptidase_M35"/>
</dbReference>
<dbReference type="PANTHER" id="PTHR37016">
    <property type="match status" value="1"/>
</dbReference>
<dbReference type="PANTHER" id="PTHR37016:SF3">
    <property type="entry name" value="NEUTRAL PROTEASE 2-RELATED"/>
    <property type="match status" value="1"/>
</dbReference>
<dbReference type="Pfam" id="PF02102">
    <property type="entry name" value="Peptidase_M35"/>
    <property type="match status" value="1"/>
</dbReference>
<dbReference type="PRINTS" id="PR00768">
    <property type="entry name" value="DEUTEROLYSIN"/>
</dbReference>
<dbReference type="SUPFAM" id="SSF55486">
    <property type="entry name" value="Metalloproteases ('zincins'), catalytic domain"/>
    <property type="match status" value="1"/>
</dbReference>
<dbReference type="PROSITE" id="PS00142">
    <property type="entry name" value="ZINC_PROTEASE"/>
    <property type="match status" value="1"/>
</dbReference>
<evidence type="ECO:0000250" key="1"/>
<evidence type="ECO:0000255" key="2"/>
<evidence type="ECO:0000255" key="3">
    <source>
        <dbReference type="PROSITE-ProRule" id="PRU10095"/>
    </source>
</evidence>
<evidence type="ECO:0000305" key="4"/>
<protein>
    <recommendedName>
        <fullName>Neutral protease 2 homolog mep20</fullName>
        <ecNumber>3.4.24.39</ecNumber>
    </recommendedName>
    <alternativeName>
        <fullName>Deuterolysin mep20</fullName>
    </alternativeName>
</protein>
<organism>
    <name type="scientific">Aspergillus fumigatus</name>
    <name type="common">Neosartorya fumigata</name>
    <dbReference type="NCBI Taxonomy" id="746128"/>
    <lineage>
        <taxon>Eukaryota</taxon>
        <taxon>Fungi</taxon>
        <taxon>Dikarya</taxon>
        <taxon>Ascomycota</taxon>
        <taxon>Pezizomycotina</taxon>
        <taxon>Eurotiomycetes</taxon>
        <taxon>Eurotiomycetidae</taxon>
        <taxon>Eurotiales</taxon>
        <taxon>Aspergillaceae</taxon>
        <taxon>Aspergillus</taxon>
        <taxon>Aspergillus subgen. Fumigati</taxon>
    </lineage>
</organism>
<accession>Q09016</accession>
<sequence length="365" mass="39031">MKVTILASAILALINGALALPANTPTLDVTLTQVDNTRIKATVKNTGNEKVTFVHLNFFQDAAPVKKVSLFRNGTEVEFTGIKRRLLTEGLSDDGLTTLAPGGTFEDEFDVASTGDLTEGGTVTIRTDGFVPITTDRKVSGYIPYQSNELEIEVDPAKAAAVPQAIKLLDRRTKVASCSGSRASALSTALRNAGSLANAAASAASSGSSTRFQEYFKTTSRRPENVGGRFRAVGREASSQSSGKTTYYCNDPYGYCDSNTLAYTLPSSNLIANCDIYYSYLPALTSSCHAQDQATTTLHEFTHAPAVYSPGTDDYAYGYRASTALSASQALLNADTYALFANGSPLLPLSNHSKCRNTMVWRTLL</sequence>
<proteinExistence type="inferred from homology"/>
<feature type="signal peptide" evidence="2">
    <location>
        <begin position="1"/>
        <end position="19"/>
    </location>
</feature>
<feature type="propeptide" id="PRO_0000407064" evidence="1">
    <location>
        <begin position="20"/>
        <end position="172"/>
    </location>
</feature>
<feature type="chain" id="PRO_0000407065" description="Neutral protease 2 homolog mep20">
    <location>
        <begin position="173"/>
        <end position="365"/>
    </location>
</feature>
<feature type="active site" evidence="3">
    <location>
        <position position="300"/>
    </location>
</feature>
<feature type="binding site" evidence="3">
    <location>
        <position position="299"/>
    </location>
    <ligand>
        <name>Zn(2+)</name>
        <dbReference type="ChEBI" id="CHEBI:29105"/>
        <note>catalytic</note>
    </ligand>
</feature>
<feature type="binding site" evidence="3">
    <location>
        <position position="303"/>
    </location>
    <ligand>
        <name>Zn(2+)</name>
        <dbReference type="ChEBI" id="CHEBI:29105"/>
        <note>catalytic</note>
    </ligand>
</feature>
<feature type="binding site" evidence="3">
    <location>
        <position position="314"/>
    </location>
    <ligand>
        <name>Zn(2+)</name>
        <dbReference type="ChEBI" id="CHEBI:29105"/>
        <note>catalytic</note>
    </ligand>
</feature>
<feature type="glycosylation site" description="N-linked (GlcNAc...) asparagine" evidence="2">
    <location>
        <position position="73"/>
    </location>
</feature>
<feature type="glycosylation site" description="N-linked (GlcNAc...) asparagine" evidence="2">
    <location>
        <position position="351"/>
    </location>
</feature>
<feature type="disulfide bond" evidence="1">
    <location>
        <begin position="178"/>
        <end position="249"/>
    </location>
</feature>
<feature type="disulfide bond" evidence="1">
    <location>
        <begin position="256"/>
        <end position="274"/>
    </location>
</feature>
<gene>
    <name type="primary">mep20</name>
</gene>
<reference key="1">
    <citation type="journal article" date="1995" name="Gene">
        <title>Cloning and characterization of the cDNAs and genes (mep20) encoding homologous metalloproteinases from Aspergillus flavus and A. fumigatus.</title>
        <authorList>
            <person name="Ramesh M.V."/>
            <person name="Sirakova T.D."/>
            <person name="Kolattukudy P.E."/>
        </authorList>
    </citation>
    <scope>NUCLEOTIDE SEQUENCE [GENOMIC DNA]</scope>
</reference>